<comment type="function">
    <text evidence="1">Part of the Sec protein translocase complex. Interacts with the SecYEG preprotein conducting channel. Has a central role in coupling the hydrolysis of ATP to the transfer of proteins into and across the cell membrane, serving as an ATP-driven molecular motor driving the stepwise translocation of polypeptide chains across the membrane.</text>
</comment>
<comment type="catalytic activity">
    <reaction evidence="1">
        <text>ATP + H2O + cellular proteinSide 1 = ADP + phosphate + cellular proteinSide 2.</text>
        <dbReference type="EC" id="7.4.2.8"/>
    </reaction>
</comment>
<comment type="cofactor">
    <cofactor evidence="1">
        <name>Zn(2+)</name>
        <dbReference type="ChEBI" id="CHEBI:29105"/>
    </cofactor>
    <text evidence="1">May bind 1 zinc ion per subunit.</text>
</comment>
<comment type="subunit">
    <text evidence="1">Monomer and homodimer. Part of the essential Sec protein translocation apparatus which comprises SecA, SecYEG and auxiliary proteins SecDF. Other proteins may also be involved.</text>
</comment>
<comment type="subcellular location">
    <subcellularLocation>
        <location evidence="1">Cell membrane</location>
        <topology evidence="1">Peripheral membrane protein</topology>
        <orientation evidence="1">Cytoplasmic side</orientation>
    </subcellularLocation>
    <subcellularLocation>
        <location evidence="1">Cytoplasm</location>
    </subcellularLocation>
    <text evidence="1">Distribution is 50-50.</text>
</comment>
<comment type="similarity">
    <text evidence="1">Belongs to the SecA family.</text>
</comment>
<reference key="1">
    <citation type="journal article" date="2005" name="Science">
        <title>Genome sequence of the PCE-dechlorinating bacterium Dehalococcoides ethenogenes.</title>
        <authorList>
            <person name="Seshadri R."/>
            <person name="Adrian L."/>
            <person name="Fouts D.E."/>
            <person name="Eisen J.A."/>
            <person name="Phillippy A.M."/>
            <person name="Methe B.A."/>
            <person name="Ward N.L."/>
            <person name="Nelson W.C."/>
            <person name="DeBoy R.T."/>
            <person name="Khouri H.M."/>
            <person name="Kolonay J.F."/>
            <person name="Dodson R.J."/>
            <person name="Daugherty S.C."/>
            <person name="Brinkac L.M."/>
            <person name="Sullivan S.A."/>
            <person name="Madupu R."/>
            <person name="Nelson K.E."/>
            <person name="Kang K.H."/>
            <person name="Impraim M."/>
            <person name="Tran K."/>
            <person name="Robinson J.M."/>
            <person name="Forberger H.A."/>
            <person name="Fraser C.M."/>
            <person name="Zinder S.H."/>
            <person name="Heidelberg J.F."/>
        </authorList>
    </citation>
    <scope>NUCLEOTIDE SEQUENCE [LARGE SCALE GENOMIC DNA]</scope>
    <source>
        <strain>ATCC BAA-2266 / KCTC 15142 / 195</strain>
    </source>
</reference>
<protein>
    <recommendedName>
        <fullName evidence="1">Protein translocase subunit SecA</fullName>
        <ecNumber evidence="1">7.4.2.8</ecNumber>
    </recommendedName>
</protein>
<dbReference type="EC" id="7.4.2.8" evidence="1"/>
<dbReference type="EMBL" id="CP000027">
    <property type="protein sequence ID" value="AAW40269.1"/>
    <property type="molecule type" value="Genomic_DNA"/>
</dbReference>
<dbReference type="RefSeq" id="WP_010936211.1">
    <property type="nucleotide sequence ID" value="NC_002936.3"/>
</dbReference>
<dbReference type="SMR" id="Q3Z9C1"/>
<dbReference type="FunCoup" id="Q3Z9C1">
    <property type="interactions" value="356"/>
</dbReference>
<dbReference type="STRING" id="243164.DET0434"/>
<dbReference type="GeneID" id="3230233"/>
<dbReference type="KEGG" id="det:DET0434"/>
<dbReference type="PATRIC" id="fig|243164.10.peg.412"/>
<dbReference type="eggNOG" id="COG0653">
    <property type="taxonomic scope" value="Bacteria"/>
</dbReference>
<dbReference type="HOGENOM" id="CLU_005314_3_0_0"/>
<dbReference type="InParanoid" id="Q3Z9C1"/>
<dbReference type="Proteomes" id="UP000008289">
    <property type="component" value="Chromosome"/>
</dbReference>
<dbReference type="GO" id="GO:0031522">
    <property type="term" value="C:cell envelope Sec protein transport complex"/>
    <property type="evidence" value="ECO:0007669"/>
    <property type="project" value="TreeGrafter"/>
</dbReference>
<dbReference type="GO" id="GO:0005829">
    <property type="term" value="C:cytosol"/>
    <property type="evidence" value="ECO:0007669"/>
    <property type="project" value="TreeGrafter"/>
</dbReference>
<dbReference type="GO" id="GO:0005886">
    <property type="term" value="C:plasma membrane"/>
    <property type="evidence" value="ECO:0007669"/>
    <property type="project" value="UniProtKB-SubCell"/>
</dbReference>
<dbReference type="GO" id="GO:0005524">
    <property type="term" value="F:ATP binding"/>
    <property type="evidence" value="ECO:0007669"/>
    <property type="project" value="UniProtKB-UniRule"/>
</dbReference>
<dbReference type="GO" id="GO:0046872">
    <property type="term" value="F:metal ion binding"/>
    <property type="evidence" value="ECO:0007669"/>
    <property type="project" value="UniProtKB-KW"/>
</dbReference>
<dbReference type="GO" id="GO:0008564">
    <property type="term" value="F:protein-exporting ATPase activity"/>
    <property type="evidence" value="ECO:0007669"/>
    <property type="project" value="UniProtKB-EC"/>
</dbReference>
<dbReference type="GO" id="GO:0065002">
    <property type="term" value="P:intracellular protein transmembrane transport"/>
    <property type="evidence" value="ECO:0007669"/>
    <property type="project" value="UniProtKB-UniRule"/>
</dbReference>
<dbReference type="GO" id="GO:0017038">
    <property type="term" value="P:protein import"/>
    <property type="evidence" value="ECO:0007669"/>
    <property type="project" value="InterPro"/>
</dbReference>
<dbReference type="GO" id="GO:0006605">
    <property type="term" value="P:protein targeting"/>
    <property type="evidence" value="ECO:0007669"/>
    <property type="project" value="UniProtKB-UniRule"/>
</dbReference>
<dbReference type="GO" id="GO:0043952">
    <property type="term" value="P:protein transport by the Sec complex"/>
    <property type="evidence" value="ECO:0007669"/>
    <property type="project" value="TreeGrafter"/>
</dbReference>
<dbReference type="CDD" id="cd17928">
    <property type="entry name" value="DEXDc_SecA"/>
    <property type="match status" value="1"/>
</dbReference>
<dbReference type="CDD" id="cd18803">
    <property type="entry name" value="SF2_C_secA"/>
    <property type="match status" value="1"/>
</dbReference>
<dbReference type="FunFam" id="3.40.50.300:FF:000113">
    <property type="entry name" value="Preprotein translocase subunit SecA"/>
    <property type="match status" value="1"/>
</dbReference>
<dbReference type="FunFam" id="3.90.1440.10:FF:000001">
    <property type="entry name" value="Preprotein translocase subunit SecA"/>
    <property type="match status" value="1"/>
</dbReference>
<dbReference type="Gene3D" id="1.10.3060.10">
    <property type="entry name" value="Helical scaffold and wing domains of SecA"/>
    <property type="match status" value="1"/>
</dbReference>
<dbReference type="Gene3D" id="3.40.50.300">
    <property type="entry name" value="P-loop containing nucleotide triphosphate hydrolases"/>
    <property type="match status" value="3"/>
</dbReference>
<dbReference type="Gene3D" id="3.90.1440.10">
    <property type="entry name" value="SecA, preprotein cross-linking domain"/>
    <property type="match status" value="1"/>
</dbReference>
<dbReference type="HAMAP" id="MF_01382">
    <property type="entry name" value="SecA"/>
    <property type="match status" value="1"/>
</dbReference>
<dbReference type="InterPro" id="IPR014001">
    <property type="entry name" value="Helicase_ATP-bd"/>
</dbReference>
<dbReference type="InterPro" id="IPR001650">
    <property type="entry name" value="Helicase_C-like"/>
</dbReference>
<dbReference type="InterPro" id="IPR027417">
    <property type="entry name" value="P-loop_NTPase"/>
</dbReference>
<dbReference type="InterPro" id="IPR004027">
    <property type="entry name" value="SEC_C_motif"/>
</dbReference>
<dbReference type="InterPro" id="IPR000185">
    <property type="entry name" value="SecA"/>
</dbReference>
<dbReference type="InterPro" id="IPR020937">
    <property type="entry name" value="SecA_CS"/>
</dbReference>
<dbReference type="InterPro" id="IPR011115">
    <property type="entry name" value="SecA_DEAD"/>
</dbReference>
<dbReference type="InterPro" id="IPR014018">
    <property type="entry name" value="SecA_motor_DEAD"/>
</dbReference>
<dbReference type="InterPro" id="IPR011130">
    <property type="entry name" value="SecA_preprotein_X-link_dom"/>
</dbReference>
<dbReference type="InterPro" id="IPR044722">
    <property type="entry name" value="SecA_SF2_C"/>
</dbReference>
<dbReference type="InterPro" id="IPR011116">
    <property type="entry name" value="SecA_Wing/Scaffold"/>
</dbReference>
<dbReference type="InterPro" id="IPR036266">
    <property type="entry name" value="SecA_Wing/Scaffold_sf"/>
</dbReference>
<dbReference type="InterPro" id="IPR036670">
    <property type="entry name" value="SecA_X-link_sf"/>
</dbReference>
<dbReference type="NCBIfam" id="NF009538">
    <property type="entry name" value="PRK12904.1"/>
    <property type="match status" value="1"/>
</dbReference>
<dbReference type="NCBIfam" id="TIGR00963">
    <property type="entry name" value="secA"/>
    <property type="match status" value="1"/>
</dbReference>
<dbReference type="PANTHER" id="PTHR30612:SF0">
    <property type="entry name" value="CHLOROPLAST PROTEIN-TRANSPORTING ATPASE"/>
    <property type="match status" value="1"/>
</dbReference>
<dbReference type="PANTHER" id="PTHR30612">
    <property type="entry name" value="SECA INNER MEMBRANE COMPONENT OF SEC PROTEIN SECRETION SYSTEM"/>
    <property type="match status" value="1"/>
</dbReference>
<dbReference type="Pfam" id="PF21090">
    <property type="entry name" value="P-loop_SecA"/>
    <property type="match status" value="1"/>
</dbReference>
<dbReference type="Pfam" id="PF02810">
    <property type="entry name" value="SEC-C"/>
    <property type="match status" value="1"/>
</dbReference>
<dbReference type="Pfam" id="PF07517">
    <property type="entry name" value="SecA_DEAD"/>
    <property type="match status" value="1"/>
</dbReference>
<dbReference type="Pfam" id="PF01043">
    <property type="entry name" value="SecA_PP_bind"/>
    <property type="match status" value="1"/>
</dbReference>
<dbReference type="Pfam" id="PF07516">
    <property type="entry name" value="SecA_SW"/>
    <property type="match status" value="1"/>
</dbReference>
<dbReference type="PRINTS" id="PR00906">
    <property type="entry name" value="SECA"/>
</dbReference>
<dbReference type="SMART" id="SM00957">
    <property type="entry name" value="SecA_DEAD"/>
    <property type="match status" value="1"/>
</dbReference>
<dbReference type="SMART" id="SM00958">
    <property type="entry name" value="SecA_PP_bind"/>
    <property type="match status" value="1"/>
</dbReference>
<dbReference type="SUPFAM" id="SSF81886">
    <property type="entry name" value="Helical scaffold and wing domains of SecA"/>
    <property type="match status" value="1"/>
</dbReference>
<dbReference type="SUPFAM" id="SSF52540">
    <property type="entry name" value="P-loop containing nucleoside triphosphate hydrolases"/>
    <property type="match status" value="2"/>
</dbReference>
<dbReference type="SUPFAM" id="SSF81767">
    <property type="entry name" value="Pre-protein crosslinking domain of SecA"/>
    <property type="match status" value="1"/>
</dbReference>
<dbReference type="PROSITE" id="PS01312">
    <property type="entry name" value="SECA"/>
    <property type="match status" value="1"/>
</dbReference>
<dbReference type="PROSITE" id="PS51196">
    <property type="entry name" value="SECA_MOTOR_DEAD"/>
    <property type="match status" value="1"/>
</dbReference>
<evidence type="ECO:0000255" key="1">
    <source>
        <dbReference type="HAMAP-Rule" id="MF_01382"/>
    </source>
</evidence>
<evidence type="ECO:0000256" key="2">
    <source>
        <dbReference type="SAM" id="MobiDB-lite"/>
    </source>
</evidence>
<keyword id="KW-0067">ATP-binding</keyword>
<keyword id="KW-1003">Cell membrane</keyword>
<keyword id="KW-0963">Cytoplasm</keyword>
<keyword id="KW-0472">Membrane</keyword>
<keyword id="KW-0479">Metal-binding</keyword>
<keyword id="KW-0547">Nucleotide-binding</keyword>
<keyword id="KW-0653">Protein transport</keyword>
<keyword id="KW-1278">Translocase</keyword>
<keyword id="KW-0811">Translocation</keyword>
<keyword id="KW-0813">Transport</keyword>
<keyword id="KW-0862">Zinc</keyword>
<organism>
    <name type="scientific">Dehalococcoides mccartyi (strain ATCC BAA-2266 / KCTC 15142 / 195)</name>
    <name type="common">Dehalococcoides ethenogenes (strain 195)</name>
    <dbReference type="NCBI Taxonomy" id="243164"/>
    <lineage>
        <taxon>Bacteria</taxon>
        <taxon>Bacillati</taxon>
        <taxon>Chloroflexota</taxon>
        <taxon>Dehalococcoidia</taxon>
        <taxon>Dehalococcoidales</taxon>
        <taxon>Dehalococcoidaceae</taxon>
        <taxon>Dehalococcoides</taxon>
    </lineage>
</organism>
<proteinExistence type="inferred from homology"/>
<gene>
    <name evidence="1" type="primary">secA</name>
    <name type="ordered locus">DET0434</name>
</gene>
<sequence>MFKFFSGFGDSNEKEIRALEPLVDKINQLESSFSALSDEALKAKTAEFKERLKETFETTASAILKDIAGTTAELEEAQKTADNSKQSRLKAKLESLNKDLSVKENAALNAILPEAFAAVREASRRTIGLRHYDVQLIGGMVLHHGKIAEMRTGEGKTLVATLPLYLNSLLGKGVHLVTVNDYLARRDAYWMGPVYHALGVSVSSIYPMQTPTEELPSRLFDPTYTSETPNDPWMHFRPISRQEAYKADITYGTSTEFGFDYLRDNLRPDLAQCVQREMNYAIVDEIDNLLIDEARTPLIISAPDTEAGKLYEVFARLAPRLAAGKDYEINEKDRNAELTEDGWANVEKLLSREGVMKGSSLYDPQNAPLIRHLRNALSAKEFYKKDHQYVVKENEVIIIDEFTGRMMLGRRYSEGLHQAIEAKEHVKIQQESKTYATVTIQNLFRMYRKLCGMTGTAATEAEEFSKIYKLEVVIIPTNKPAIREDYGDQIYKDQSAKFKAVVNEINEMRNLGRPVLVGTVSIENSEMLSNMLKRQGIEHKVLNAKQHEKEAQVVAEAGKPGAVTVATNMAGRGVDILLGGKEPPKDDDKAYSQWQVHHQQVLEAGGLHVIGTERHESRRIDNQLRGRSGRQGDPGSSRFYVALDDDIMRRFGSERIQGIMEWAGMDENTPIENGLVSRTLENAQKRVEGYHFDVRKHLVEYDDVVNKHREVIYAERRKILLGADLKSNILDMIREEIMTQTAEHTQGYDSSEWNLEGLVTHIGGIFALPAEINAEALAKLSQEEITELLTRTAEELYQKKEAEIGAGSMRLLERIIMLHTLDSLWVEHLTIMENLRREIGLQAFAQRDPLIAYKNEGHVRFQELLETIKHDVVHNIYRVNIQIQHQTESATAKAASRPVQQQKPLPAAPAAAIPGVSAKAATQPAAPAAKEVGRNDPCPCGSGKKYKKCCGK</sequence>
<name>SECA_DEHM1</name>
<accession>Q3Z9C1</accession>
<feature type="chain" id="PRO_0000320789" description="Protein translocase subunit SecA">
    <location>
        <begin position="1"/>
        <end position="952"/>
    </location>
</feature>
<feature type="region of interest" description="Disordered" evidence="2">
    <location>
        <begin position="916"/>
        <end position="952"/>
    </location>
</feature>
<feature type="compositionally biased region" description="Low complexity" evidence="2">
    <location>
        <begin position="916"/>
        <end position="930"/>
    </location>
</feature>
<feature type="binding site" evidence="1">
    <location>
        <position position="135"/>
    </location>
    <ligand>
        <name>ATP</name>
        <dbReference type="ChEBI" id="CHEBI:30616"/>
    </ligand>
</feature>
<feature type="binding site" evidence="1">
    <location>
        <begin position="153"/>
        <end position="157"/>
    </location>
    <ligand>
        <name>ATP</name>
        <dbReference type="ChEBI" id="CHEBI:30616"/>
    </ligand>
</feature>
<feature type="binding site" evidence="1">
    <location>
        <position position="575"/>
    </location>
    <ligand>
        <name>ATP</name>
        <dbReference type="ChEBI" id="CHEBI:30616"/>
    </ligand>
</feature>
<feature type="binding site" evidence="1">
    <location>
        <position position="938"/>
    </location>
    <ligand>
        <name>Zn(2+)</name>
        <dbReference type="ChEBI" id="CHEBI:29105"/>
    </ligand>
</feature>
<feature type="binding site" evidence="1">
    <location>
        <position position="940"/>
    </location>
    <ligand>
        <name>Zn(2+)</name>
        <dbReference type="ChEBI" id="CHEBI:29105"/>
    </ligand>
</feature>
<feature type="binding site" evidence="1">
    <location>
        <position position="949"/>
    </location>
    <ligand>
        <name>Zn(2+)</name>
        <dbReference type="ChEBI" id="CHEBI:29105"/>
    </ligand>
</feature>
<feature type="binding site" evidence="1">
    <location>
        <position position="950"/>
    </location>
    <ligand>
        <name>Zn(2+)</name>
        <dbReference type="ChEBI" id="CHEBI:29105"/>
    </ligand>
</feature>